<gene>
    <name evidence="1" type="primary">rplU</name>
    <name type="ordered locus">SAUSA300_1603</name>
</gene>
<accession>Q2FG80</accession>
<feature type="chain" id="PRO_0000269386" description="Large ribosomal subunit protein bL21">
    <location>
        <begin position="1"/>
        <end position="102"/>
    </location>
</feature>
<feature type="region of interest" description="Disordered" evidence="2">
    <location>
        <begin position="80"/>
        <end position="102"/>
    </location>
</feature>
<feature type="compositionally biased region" description="Basic residues" evidence="2">
    <location>
        <begin position="80"/>
        <end position="91"/>
    </location>
</feature>
<dbReference type="EMBL" id="CP000255">
    <property type="protein sequence ID" value="ABD21817.1"/>
    <property type="molecule type" value="Genomic_DNA"/>
</dbReference>
<dbReference type="RefSeq" id="WP_000457386.1">
    <property type="nucleotide sequence ID" value="NZ_CP027476.1"/>
</dbReference>
<dbReference type="SMR" id="Q2FG80"/>
<dbReference type="GeneID" id="66839833"/>
<dbReference type="KEGG" id="saa:SAUSA300_1603"/>
<dbReference type="HOGENOM" id="CLU_061463_3_2_9"/>
<dbReference type="OMA" id="HRQPFTK"/>
<dbReference type="Proteomes" id="UP000001939">
    <property type="component" value="Chromosome"/>
</dbReference>
<dbReference type="GO" id="GO:0005737">
    <property type="term" value="C:cytoplasm"/>
    <property type="evidence" value="ECO:0007669"/>
    <property type="project" value="UniProtKB-ARBA"/>
</dbReference>
<dbReference type="GO" id="GO:1990904">
    <property type="term" value="C:ribonucleoprotein complex"/>
    <property type="evidence" value="ECO:0007669"/>
    <property type="project" value="UniProtKB-KW"/>
</dbReference>
<dbReference type="GO" id="GO:0005840">
    <property type="term" value="C:ribosome"/>
    <property type="evidence" value="ECO:0007669"/>
    <property type="project" value="UniProtKB-KW"/>
</dbReference>
<dbReference type="GO" id="GO:0019843">
    <property type="term" value="F:rRNA binding"/>
    <property type="evidence" value="ECO:0007669"/>
    <property type="project" value="UniProtKB-UniRule"/>
</dbReference>
<dbReference type="GO" id="GO:0003735">
    <property type="term" value="F:structural constituent of ribosome"/>
    <property type="evidence" value="ECO:0007669"/>
    <property type="project" value="InterPro"/>
</dbReference>
<dbReference type="GO" id="GO:0006412">
    <property type="term" value="P:translation"/>
    <property type="evidence" value="ECO:0007669"/>
    <property type="project" value="UniProtKB-UniRule"/>
</dbReference>
<dbReference type="HAMAP" id="MF_01363">
    <property type="entry name" value="Ribosomal_bL21"/>
    <property type="match status" value="1"/>
</dbReference>
<dbReference type="InterPro" id="IPR028909">
    <property type="entry name" value="bL21-like"/>
</dbReference>
<dbReference type="InterPro" id="IPR036164">
    <property type="entry name" value="bL21-like_sf"/>
</dbReference>
<dbReference type="InterPro" id="IPR001787">
    <property type="entry name" value="Ribosomal_bL21"/>
</dbReference>
<dbReference type="NCBIfam" id="TIGR00061">
    <property type="entry name" value="L21"/>
    <property type="match status" value="1"/>
</dbReference>
<dbReference type="PANTHER" id="PTHR21349">
    <property type="entry name" value="50S RIBOSOMAL PROTEIN L21"/>
    <property type="match status" value="1"/>
</dbReference>
<dbReference type="PANTHER" id="PTHR21349:SF0">
    <property type="entry name" value="LARGE RIBOSOMAL SUBUNIT PROTEIN BL21M"/>
    <property type="match status" value="1"/>
</dbReference>
<dbReference type="Pfam" id="PF00829">
    <property type="entry name" value="Ribosomal_L21p"/>
    <property type="match status" value="1"/>
</dbReference>
<dbReference type="SUPFAM" id="SSF141091">
    <property type="entry name" value="L21p-like"/>
    <property type="match status" value="1"/>
</dbReference>
<comment type="function">
    <text evidence="1">This protein binds to 23S rRNA in the presence of protein L20.</text>
</comment>
<comment type="subunit">
    <text evidence="1">Part of the 50S ribosomal subunit. Contacts protein L20.</text>
</comment>
<comment type="similarity">
    <text evidence="1">Belongs to the bacterial ribosomal protein bL21 family.</text>
</comment>
<organism>
    <name type="scientific">Staphylococcus aureus (strain USA300)</name>
    <dbReference type="NCBI Taxonomy" id="367830"/>
    <lineage>
        <taxon>Bacteria</taxon>
        <taxon>Bacillati</taxon>
        <taxon>Bacillota</taxon>
        <taxon>Bacilli</taxon>
        <taxon>Bacillales</taxon>
        <taxon>Staphylococcaceae</taxon>
        <taxon>Staphylococcus</taxon>
    </lineage>
</organism>
<sequence>MFAIIETGGKQIKVEEGQEIFVEKLDVNEGDTFTFDKVLFVGGDSVKVGAPTVEGATVTATVNKQGRGKKITVFTYKRRKNSKRKKGHRQPYTKLTIDKINA</sequence>
<name>RL21_STAA3</name>
<reference key="1">
    <citation type="journal article" date="2006" name="Lancet">
        <title>Complete genome sequence of USA300, an epidemic clone of community-acquired meticillin-resistant Staphylococcus aureus.</title>
        <authorList>
            <person name="Diep B.A."/>
            <person name="Gill S.R."/>
            <person name="Chang R.F."/>
            <person name="Phan T.H."/>
            <person name="Chen J.H."/>
            <person name="Davidson M.G."/>
            <person name="Lin F."/>
            <person name="Lin J."/>
            <person name="Carleton H.A."/>
            <person name="Mongodin E.F."/>
            <person name="Sensabaugh G.F."/>
            <person name="Perdreau-Remington F."/>
        </authorList>
    </citation>
    <scope>NUCLEOTIDE SEQUENCE [LARGE SCALE GENOMIC DNA]</scope>
    <source>
        <strain>USA300</strain>
    </source>
</reference>
<proteinExistence type="inferred from homology"/>
<protein>
    <recommendedName>
        <fullName evidence="1">Large ribosomal subunit protein bL21</fullName>
    </recommendedName>
    <alternativeName>
        <fullName evidence="3">50S ribosomal protein L21</fullName>
    </alternativeName>
</protein>
<keyword id="KW-0687">Ribonucleoprotein</keyword>
<keyword id="KW-0689">Ribosomal protein</keyword>
<keyword id="KW-0694">RNA-binding</keyword>
<keyword id="KW-0699">rRNA-binding</keyword>
<evidence type="ECO:0000255" key="1">
    <source>
        <dbReference type="HAMAP-Rule" id="MF_01363"/>
    </source>
</evidence>
<evidence type="ECO:0000256" key="2">
    <source>
        <dbReference type="SAM" id="MobiDB-lite"/>
    </source>
</evidence>
<evidence type="ECO:0000305" key="3"/>